<organism>
    <name type="scientific">Burkholderia lata (strain ATCC 17760 / DSM 23089 / LMG 22485 / NCIMB 9086 / R18194 / 383)</name>
    <dbReference type="NCBI Taxonomy" id="482957"/>
    <lineage>
        <taxon>Bacteria</taxon>
        <taxon>Pseudomonadati</taxon>
        <taxon>Pseudomonadota</taxon>
        <taxon>Betaproteobacteria</taxon>
        <taxon>Burkholderiales</taxon>
        <taxon>Burkholderiaceae</taxon>
        <taxon>Burkholderia</taxon>
        <taxon>Burkholderia cepacia complex</taxon>
    </lineage>
</organism>
<keyword id="KW-0028">Amino-acid biosynthesis</keyword>
<keyword id="KW-0057">Aromatic amino acid biosynthesis</keyword>
<keyword id="KW-0456">Lyase</keyword>
<keyword id="KW-0822">Tryptophan biosynthesis</keyword>
<dbReference type="EC" id="4.2.1.20" evidence="1"/>
<dbReference type="EMBL" id="CP000152">
    <property type="protein sequence ID" value="ABB12234.1"/>
    <property type="molecule type" value="Genomic_DNA"/>
</dbReference>
<dbReference type="RefSeq" id="WP_011355717.1">
    <property type="nucleotide sequence ID" value="NC_007511.1"/>
</dbReference>
<dbReference type="SMR" id="Q393Y2"/>
<dbReference type="GeneID" id="45098449"/>
<dbReference type="KEGG" id="bur:Bcep18194_B2123"/>
<dbReference type="PATRIC" id="fig|482957.22.peg.5876"/>
<dbReference type="HOGENOM" id="CLU_016734_0_0_4"/>
<dbReference type="UniPathway" id="UPA00035">
    <property type="reaction ID" value="UER00044"/>
</dbReference>
<dbReference type="Proteomes" id="UP000002705">
    <property type="component" value="Chromosome 2"/>
</dbReference>
<dbReference type="GO" id="GO:0005829">
    <property type="term" value="C:cytosol"/>
    <property type="evidence" value="ECO:0007669"/>
    <property type="project" value="TreeGrafter"/>
</dbReference>
<dbReference type="GO" id="GO:0004834">
    <property type="term" value="F:tryptophan synthase activity"/>
    <property type="evidence" value="ECO:0007669"/>
    <property type="project" value="UniProtKB-UniRule"/>
</dbReference>
<dbReference type="CDD" id="cd04724">
    <property type="entry name" value="Tryptophan_synthase_alpha"/>
    <property type="match status" value="1"/>
</dbReference>
<dbReference type="FunFam" id="3.20.20.70:FF:000037">
    <property type="entry name" value="Tryptophan synthase alpha chain"/>
    <property type="match status" value="1"/>
</dbReference>
<dbReference type="Gene3D" id="3.20.20.70">
    <property type="entry name" value="Aldolase class I"/>
    <property type="match status" value="1"/>
</dbReference>
<dbReference type="HAMAP" id="MF_00131">
    <property type="entry name" value="Trp_synth_alpha"/>
    <property type="match status" value="1"/>
</dbReference>
<dbReference type="InterPro" id="IPR013785">
    <property type="entry name" value="Aldolase_TIM"/>
</dbReference>
<dbReference type="InterPro" id="IPR011060">
    <property type="entry name" value="RibuloseP-bd_barrel"/>
</dbReference>
<dbReference type="InterPro" id="IPR018204">
    <property type="entry name" value="Trp_synthase_alpha_AS"/>
</dbReference>
<dbReference type="InterPro" id="IPR002028">
    <property type="entry name" value="Trp_synthase_suA"/>
</dbReference>
<dbReference type="NCBIfam" id="TIGR00262">
    <property type="entry name" value="trpA"/>
    <property type="match status" value="1"/>
</dbReference>
<dbReference type="PANTHER" id="PTHR43406:SF1">
    <property type="entry name" value="TRYPTOPHAN SYNTHASE ALPHA CHAIN, CHLOROPLASTIC"/>
    <property type="match status" value="1"/>
</dbReference>
<dbReference type="PANTHER" id="PTHR43406">
    <property type="entry name" value="TRYPTOPHAN SYNTHASE, ALPHA CHAIN"/>
    <property type="match status" value="1"/>
</dbReference>
<dbReference type="Pfam" id="PF00290">
    <property type="entry name" value="Trp_syntA"/>
    <property type="match status" value="1"/>
</dbReference>
<dbReference type="SUPFAM" id="SSF51366">
    <property type="entry name" value="Ribulose-phoshate binding barrel"/>
    <property type="match status" value="1"/>
</dbReference>
<dbReference type="PROSITE" id="PS00167">
    <property type="entry name" value="TRP_SYNTHASE_ALPHA"/>
    <property type="match status" value="1"/>
</dbReference>
<feature type="chain" id="PRO_1000018180" description="Tryptophan synthase alpha chain">
    <location>
        <begin position="1"/>
        <end position="271"/>
    </location>
</feature>
<feature type="active site" description="Proton acceptor" evidence="1">
    <location>
        <position position="49"/>
    </location>
</feature>
<feature type="active site" description="Proton acceptor" evidence="1">
    <location>
        <position position="60"/>
    </location>
</feature>
<name>TRPA_BURL3</name>
<proteinExistence type="inferred from homology"/>
<gene>
    <name evidence="1" type="primary">trpA</name>
    <name type="ordered locus">Bcep18194_B2123</name>
</gene>
<comment type="function">
    <text evidence="1">The alpha subunit is responsible for the aldol cleavage of indoleglycerol phosphate to indole and glyceraldehyde 3-phosphate.</text>
</comment>
<comment type="catalytic activity">
    <reaction evidence="1">
        <text>(1S,2R)-1-C-(indol-3-yl)glycerol 3-phosphate + L-serine = D-glyceraldehyde 3-phosphate + L-tryptophan + H2O</text>
        <dbReference type="Rhea" id="RHEA:10532"/>
        <dbReference type="ChEBI" id="CHEBI:15377"/>
        <dbReference type="ChEBI" id="CHEBI:33384"/>
        <dbReference type="ChEBI" id="CHEBI:57912"/>
        <dbReference type="ChEBI" id="CHEBI:58866"/>
        <dbReference type="ChEBI" id="CHEBI:59776"/>
        <dbReference type="EC" id="4.2.1.20"/>
    </reaction>
</comment>
<comment type="pathway">
    <text evidence="1">Amino-acid biosynthesis; L-tryptophan biosynthesis; L-tryptophan from chorismate: step 5/5.</text>
</comment>
<comment type="subunit">
    <text evidence="1">Tetramer of two alpha and two beta chains.</text>
</comment>
<comment type="similarity">
    <text evidence="1">Belongs to the TrpA family.</text>
</comment>
<sequence length="271" mass="28201">MNRIQQTFAALAEQGRKGLIPFITAGDPDPAKTVEFMHALAEGGADVIELGVPFSDPMADGPVIQRSSERALARGVTLKSVLADVKRFRETDPKTPVVLMGYANPIERMGVDTFAAEAQAAGVDGVLVVDYPPEEAGVFAEKMRAAQIDPIFLLAPTSTDERIADVGKIASGYVYYVSLKGVTGAGNLDVSSIAGKIPAIKSRVPVPVGVGFGIRDAETARAVAEVSDAVVIGSRLVQLLESAAPEGAAAALKTFIAELRAALDGAGKTAR</sequence>
<accession>Q393Y2</accession>
<evidence type="ECO:0000255" key="1">
    <source>
        <dbReference type="HAMAP-Rule" id="MF_00131"/>
    </source>
</evidence>
<reference key="1">
    <citation type="submission" date="2005-10" db="EMBL/GenBank/DDBJ databases">
        <title>Complete sequence of chromosome 2 of Burkholderia sp. 383.</title>
        <authorList>
            <consortium name="US DOE Joint Genome Institute"/>
            <person name="Copeland A."/>
            <person name="Lucas S."/>
            <person name="Lapidus A."/>
            <person name="Barry K."/>
            <person name="Detter J.C."/>
            <person name="Glavina T."/>
            <person name="Hammon N."/>
            <person name="Israni S."/>
            <person name="Pitluck S."/>
            <person name="Chain P."/>
            <person name="Malfatti S."/>
            <person name="Shin M."/>
            <person name="Vergez L."/>
            <person name="Schmutz J."/>
            <person name="Larimer F."/>
            <person name="Land M."/>
            <person name="Kyrpides N."/>
            <person name="Lykidis A."/>
            <person name="Richardson P."/>
        </authorList>
    </citation>
    <scope>NUCLEOTIDE SEQUENCE [LARGE SCALE GENOMIC DNA]</scope>
    <source>
        <strain>ATCC 17760 / DSM 23089 / LMG 22485 / NCIMB 9086 / R18194 / 383</strain>
    </source>
</reference>
<protein>
    <recommendedName>
        <fullName evidence="1">Tryptophan synthase alpha chain</fullName>
        <ecNumber evidence="1">4.2.1.20</ecNumber>
    </recommendedName>
</protein>